<dbReference type="EC" id="4.1.1.11" evidence="1"/>
<dbReference type="EMBL" id="CP001407">
    <property type="protein sequence ID" value="ACO29466.1"/>
    <property type="molecule type" value="Genomic_DNA"/>
</dbReference>
<dbReference type="RefSeq" id="WP_000490176.1">
    <property type="nucleotide sequence ID" value="NZ_CP009318.1"/>
</dbReference>
<dbReference type="SMR" id="C1EN38"/>
<dbReference type="GeneID" id="75084853"/>
<dbReference type="KEGG" id="bcx:BCA_1600"/>
<dbReference type="PATRIC" id="fig|572264.18.peg.1548"/>
<dbReference type="UniPathway" id="UPA00028">
    <property type="reaction ID" value="UER00002"/>
</dbReference>
<dbReference type="Proteomes" id="UP000002210">
    <property type="component" value="Chromosome"/>
</dbReference>
<dbReference type="GO" id="GO:0005829">
    <property type="term" value="C:cytosol"/>
    <property type="evidence" value="ECO:0007669"/>
    <property type="project" value="TreeGrafter"/>
</dbReference>
<dbReference type="GO" id="GO:0004068">
    <property type="term" value="F:aspartate 1-decarboxylase activity"/>
    <property type="evidence" value="ECO:0007669"/>
    <property type="project" value="UniProtKB-UniRule"/>
</dbReference>
<dbReference type="GO" id="GO:0006523">
    <property type="term" value="P:alanine biosynthetic process"/>
    <property type="evidence" value="ECO:0007669"/>
    <property type="project" value="InterPro"/>
</dbReference>
<dbReference type="GO" id="GO:0015940">
    <property type="term" value="P:pantothenate biosynthetic process"/>
    <property type="evidence" value="ECO:0007669"/>
    <property type="project" value="UniProtKB-UniRule"/>
</dbReference>
<dbReference type="CDD" id="cd06919">
    <property type="entry name" value="Asp_decarbox"/>
    <property type="match status" value="1"/>
</dbReference>
<dbReference type="Gene3D" id="2.40.40.20">
    <property type="match status" value="1"/>
</dbReference>
<dbReference type="HAMAP" id="MF_00446">
    <property type="entry name" value="PanD"/>
    <property type="match status" value="1"/>
</dbReference>
<dbReference type="InterPro" id="IPR009010">
    <property type="entry name" value="Asp_de-COase-like_dom_sf"/>
</dbReference>
<dbReference type="InterPro" id="IPR003190">
    <property type="entry name" value="Asp_decarbox"/>
</dbReference>
<dbReference type="NCBIfam" id="TIGR00223">
    <property type="entry name" value="panD"/>
    <property type="match status" value="1"/>
</dbReference>
<dbReference type="PANTHER" id="PTHR21012">
    <property type="entry name" value="ASPARTATE 1-DECARBOXYLASE"/>
    <property type="match status" value="1"/>
</dbReference>
<dbReference type="PANTHER" id="PTHR21012:SF0">
    <property type="entry name" value="ASPARTATE 1-DECARBOXYLASE"/>
    <property type="match status" value="1"/>
</dbReference>
<dbReference type="Pfam" id="PF02261">
    <property type="entry name" value="Asp_decarbox"/>
    <property type="match status" value="1"/>
</dbReference>
<dbReference type="PIRSF" id="PIRSF006246">
    <property type="entry name" value="Asp_decarbox"/>
    <property type="match status" value="1"/>
</dbReference>
<dbReference type="SUPFAM" id="SSF50692">
    <property type="entry name" value="ADC-like"/>
    <property type="match status" value="1"/>
</dbReference>
<protein>
    <recommendedName>
        <fullName evidence="1">Aspartate 1-decarboxylase</fullName>
        <ecNumber evidence="1">4.1.1.11</ecNumber>
    </recommendedName>
    <alternativeName>
        <fullName evidence="1">Aspartate alpha-decarboxylase</fullName>
    </alternativeName>
    <component>
        <recommendedName>
            <fullName evidence="1">Aspartate 1-decarboxylase beta chain</fullName>
        </recommendedName>
    </component>
    <component>
        <recommendedName>
            <fullName evidence="1">Aspartate 1-decarboxylase alpha chain</fullName>
        </recommendedName>
    </component>
</protein>
<keyword id="KW-0068">Autocatalytic cleavage</keyword>
<keyword id="KW-0963">Cytoplasm</keyword>
<keyword id="KW-0210">Decarboxylase</keyword>
<keyword id="KW-0456">Lyase</keyword>
<keyword id="KW-0566">Pantothenate biosynthesis</keyword>
<keyword id="KW-0670">Pyruvate</keyword>
<keyword id="KW-0704">Schiff base</keyword>
<keyword id="KW-0865">Zymogen</keyword>
<proteinExistence type="inferred from homology"/>
<feature type="chain" id="PRO_1000191928" description="Aspartate 1-decarboxylase beta chain" evidence="1">
    <location>
        <begin position="1"/>
        <end position="24"/>
    </location>
</feature>
<feature type="chain" id="PRO_1000191929" description="Aspartate 1-decarboxylase alpha chain" evidence="1">
    <location>
        <begin position="25"/>
        <end position="127"/>
    </location>
</feature>
<feature type="active site" description="Schiff-base intermediate with substrate; via pyruvic acid" evidence="1">
    <location>
        <position position="25"/>
    </location>
</feature>
<feature type="active site" description="Proton donor" evidence="1">
    <location>
        <position position="58"/>
    </location>
</feature>
<feature type="binding site" evidence="1">
    <location>
        <position position="57"/>
    </location>
    <ligand>
        <name>substrate</name>
    </ligand>
</feature>
<feature type="binding site" evidence="1">
    <location>
        <begin position="73"/>
        <end position="75"/>
    </location>
    <ligand>
        <name>substrate</name>
    </ligand>
</feature>
<feature type="modified residue" description="Pyruvic acid (Ser)" evidence="1">
    <location>
        <position position="25"/>
    </location>
</feature>
<organism>
    <name type="scientific">Bacillus cereus (strain 03BB102)</name>
    <dbReference type="NCBI Taxonomy" id="572264"/>
    <lineage>
        <taxon>Bacteria</taxon>
        <taxon>Bacillati</taxon>
        <taxon>Bacillota</taxon>
        <taxon>Bacilli</taxon>
        <taxon>Bacillales</taxon>
        <taxon>Bacillaceae</taxon>
        <taxon>Bacillus</taxon>
        <taxon>Bacillus cereus group</taxon>
    </lineage>
</organism>
<name>PAND_BACC3</name>
<evidence type="ECO:0000255" key="1">
    <source>
        <dbReference type="HAMAP-Rule" id="MF_00446"/>
    </source>
</evidence>
<reference key="1">
    <citation type="submission" date="2009-02" db="EMBL/GenBank/DDBJ databases">
        <title>Genome sequence of Bacillus cereus 03BB102.</title>
        <authorList>
            <person name="Dodson R.J."/>
            <person name="Jackson P."/>
            <person name="Munk A.C."/>
            <person name="Brettin T."/>
            <person name="Bruce D."/>
            <person name="Detter C."/>
            <person name="Tapia R."/>
            <person name="Han C."/>
            <person name="Sutton G."/>
            <person name="Sims D."/>
        </authorList>
    </citation>
    <scope>NUCLEOTIDE SEQUENCE [LARGE SCALE GENOMIC DNA]</scope>
    <source>
        <strain>03BB102</strain>
    </source>
</reference>
<accession>C1EN38</accession>
<comment type="function">
    <text evidence="1">Catalyzes the pyruvoyl-dependent decarboxylation of aspartate to produce beta-alanine.</text>
</comment>
<comment type="catalytic activity">
    <reaction evidence="1">
        <text>L-aspartate + H(+) = beta-alanine + CO2</text>
        <dbReference type="Rhea" id="RHEA:19497"/>
        <dbReference type="ChEBI" id="CHEBI:15378"/>
        <dbReference type="ChEBI" id="CHEBI:16526"/>
        <dbReference type="ChEBI" id="CHEBI:29991"/>
        <dbReference type="ChEBI" id="CHEBI:57966"/>
        <dbReference type="EC" id="4.1.1.11"/>
    </reaction>
</comment>
<comment type="cofactor">
    <cofactor evidence="1">
        <name>pyruvate</name>
        <dbReference type="ChEBI" id="CHEBI:15361"/>
    </cofactor>
    <text evidence="1">Binds 1 pyruvoyl group covalently per subunit.</text>
</comment>
<comment type="pathway">
    <text evidence="1">Cofactor biosynthesis; (R)-pantothenate biosynthesis; beta-alanine from L-aspartate: step 1/1.</text>
</comment>
<comment type="subunit">
    <text evidence="1">Heterooctamer of four alpha and four beta subunits.</text>
</comment>
<comment type="subcellular location">
    <subcellularLocation>
        <location evidence="1">Cytoplasm</location>
    </subcellularLocation>
</comment>
<comment type="PTM">
    <text evidence="1">Is synthesized initially as an inactive proenzyme, which is activated by self-cleavage at a specific serine bond to produce a beta-subunit with a hydroxyl group at its C-terminus and an alpha-subunit with a pyruvoyl group at its N-terminus.</text>
</comment>
<comment type="similarity">
    <text evidence="1">Belongs to the PanD family.</text>
</comment>
<sequence length="127" mass="13909">MFRTMMRAKLHRATVTEANLNYVGSITIDEDLMDAVNIVENEKVQIVNNNNGARLETYVIKGERGSGVVCLNGAAARLVQPGDKVIIICYGLVAEENIHKQEPKIAVLDDDNQIIEMLGAEKAGTIL</sequence>
<gene>
    <name evidence="1" type="primary">panD</name>
    <name type="ordered locus">BCA_1600</name>
</gene>